<keyword id="KW-0521">NADP</keyword>
<keyword id="KW-0560">Oxidoreductase</keyword>
<keyword id="KW-0627">Porphyrin biosynthesis</keyword>
<keyword id="KW-1185">Reference proteome</keyword>
<gene>
    <name evidence="1" type="primary">hemA</name>
    <name type="ordered locus">CHAB381_0896</name>
</gene>
<proteinExistence type="inferred from homology"/>
<evidence type="ECO:0000255" key="1">
    <source>
        <dbReference type="HAMAP-Rule" id="MF_00087"/>
    </source>
</evidence>
<feature type="chain" id="PRO_1000057572" description="Glutamyl-tRNA reductase">
    <location>
        <begin position="1"/>
        <end position="429"/>
    </location>
</feature>
<feature type="active site" description="Nucleophile" evidence="1">
    <location>
        <position position="51"/>
    </location>
</feature>
<feature type="binding site" evidence="1">
    <location>
        <begin position="50"/>
        <end position="53"/>
    </location>
    <ligand>
        <name>substrate</name>
    </ligand>
</feature>
<feature type="binding site" evidence="1">
    <location>
        <position position="110"/>
    </location>
    <ligand>
        <name>substrate</name>
    </ligand>
</feature>
<feature type="binding site" evidence="1">
    <location>
        <begin position="115"/>
        <end position="117"/>
    </location>
    <ligand>
        <name>substrate</name>
    </ligand>
</feature>
<feature type="binding site" evidence="1">
    <location>
        <position position="121"/>
    </location>
    <ligand>
        <name>substrate</name>
    </ligand>
</feature>
<feature type="binding site" evidence="1">
    <location>
        <begin position="190"/>
        <end position="195"/>
    </location>
    <ligand>
        <name>NADP(+)</name>
        <dbReference type="ChEBI" id="CHEBI:58349"/>
    </ligand>
</feature>
<feature type="site" description="Important for activity" evidence="1">
    <location>
        <position position="100"/>
    </location>
</feature>
<reference key="1">
    <citation type="submission" date="2007-07" db="EMBL/GenBank/DDBJ databases">
        <title>Complete genome sequence of Campylobacter hominis ATCC BAA-381, a commensal isolated from the human gastrointestinal tract.</title>
        <authorList>
            <person name="Fouts D.E."/>
            <person name="Mongodin E.F."/>
            <person name="Puiu D."/>
            <person name="Sebastian Y."/>
            <person name="Miller W.G."/>
            <person name="Mandrell R.E."/>
            <person name="Nelson K.E."/>
        </authorList>
    </citation>
    <scope>NUCLEOTIDE SEQUENCE [LARGE SCALE GENOMIC DNA]</scope>
    <source>
        <strain>ATCC BAA-381 / DSM 21671 / CCUG 45161 / LMG 19568 / NCTC 13146 / CH001A</strain>
    </source>
</reference>
<accession>A7I1R7</accession>
<comment type="function">
    <text evidence="1">Catalyzes the NADPH-dependent reduction of glutamyl-tRNA(Glu) to glutamate 1-semialdehyde (GSA).</text>
</comment>
<comment type="catalytic activity">
    <reaction evidence="1">
        <text>(S)-4-amino-5-oxopentanoate + tRNA(Glu) + NADP(+) = L-glutamyl-tRNA(Glu) + NADPH + H(+)</text>
        <dbReference type="Rhea" id="RHEA:12344"/>
        <dbReference type="Rhea" id="RHEA-COMP:9663"/>
        <dbReference type="Rhea" id="RHEA-COMP:9680"/>
        <dbReference type="ChEBI" id="CHEBI:15378"/>
        <dbReference type="ChEBI" id="CHEBI:57501"/>
        <dbReference type="ChEBI" id="CHEBI:57783"/>
        <dbReference type="ChEBI" id="CHEBI:58349"/>
        <dbReference type="ChEBI" id="CHEBI:78442"/>
        <dbReference type="ChEBI" id="CHEBI:78520"/>
        <dbReference type="EC" id="1.2.1.70"/>
    </reaction>
</comment>
<comment type="pathway">
    <text evidence="1">Porphyrin-containing compound metabolism; protoporphyrin-IX biosynthesis; 5-aminolevulinate from L-glutamyl-tRNA(Glu): step 1/2.</text>
</comment>
<comment type="subunit">
    <text evidence="1">Homodimer.</text>
</comment>
<comment type="domain">
    <text evidence="1">Possesses an unusual extended V-shaped dimeric structure with each monomer consisting of three distinct domains arranged along a curved 'spinal' alpha-helix. The N-terminal catalytic domain specifically recognizes the glutamate moiety of the substrate. The second domain is the NADPH-binding domain, and the third C-terminal domain is responsible for dimerization.</text>
</comment>
<comment type="miscellaneous">
    <text evidence="1">During catalysis, the active site Cys acts as a nucleophile attacking the alpha-carbonyl group of tRNA-bound glutamate with the formation of a thioester intermediate between enzyme and glutamate, and the concomitant release of tRNA(Glu). The thioester intermediate is finally reduced by direct hydride transfer from NADPH, to form the product GSA.</text>
</comment>
<comment type="similarity">
    <text evidence="1">Belongs to the glutamyl-tRNA reductase family.</text>
</comment>
<sequence>MNYMSVSFTHKNTDIIVREKLSFANDVKKREILKLICSNKAIKECLVLSTCNRVEVLAYIDDFNYTSDYVIKAISKLSGVDFDELKERADIYEDDGAIHHLFSVASSLDSLVVGETQIVGQLKDAYNFAKNERKSGVMLDLAINSALKCAAVIRSKTDISKNPISVASVAVCMAREKIGDLGGTTAVVVGAGEMAELACKHLITHKAKVIIINRNIDHAKKLAESLGENASIAEFSNLGEFINKYALIFSATGANKPIITDLLAKPQNFKRYFFDIAVPRDIDITCDDLSEVYAVDDLEEIVRKNLLLREEQAQIAYSIVGRETTKFYKDLKTLSSTPIIKALRNSAKKVAETELKKAIKRGYLRHSDIDEARKLIHQVFKAFLHTPTVNLKNLDENAQNDINAIAEIFGIEEDFDKFCENSLENKNEI</sequence>
<name>HEM1_CAMHC</name>
<dbReference type="EC" id="1.2.1.70" evidence="1"/>
<dbReference type="EMBL" id="CP000776">
    <property type="protein sequence ID" value="ABS52226.1"/>
    <property type="molecule type" value="Genomic_DNA"/>
</dbReference>
<dbReference type="RefSeq" id="WP_012108749.1">
    <property type="nucleotide sequence ID" value="NC_009714.1"/>
</dbReference>
<dbReference type="SMR" id="A7I1R7"/>
<dbReference type="STRING" id="360107.CHAB381_0896"/>
<dbReference type="KEGG" id="cha:CHAB381_0896"/>
<dbReference type="eggNOG" id="COG0373">
    <property type="taxonomic scope" value="Bacteria"/>
</dbReference>
<dbReference type="HOGENOM" id="CLU_035113_2_2_7"/>
<dbReference type="OrthoDB" id="110209at2"/>
<dbReference type="UniPathway" id="UPA00251">
    <property type="reaction ID" value="UER00316"/>
</dbReference>
<dbReference type="Proteomes" id="UP000002407">
    <property type="component" value="Chromosome"/>
</dbReference>
<dbReference type="GO" id="GO:0008883">
    <property type="term" value="F:glutamyl-tRNA reductase activity"/>
    <property type="evidence" value="ECO:0007669"/>
    <property type="project" value="UniProtKB-UniRule"/>
</dbReference>
<dbReference type="GO" id="GO:0050661">
    <property type="term" value="F:NADP binding"/>
    <property type="evidence" value="ECO:0007669"/>
    <property type="project" value="InterPro"/>
</dbReference>
<dbReference type="GO" id="GO:0019353">
    <property type="term" value="P:protoporphyrinogen IX biosynthetic process from glutamate"/>
    <property type="evidence" value="ECO:0007669"/>
    <property type="project" value="TreeGrafter"/>
</dbReference>
<dbReference type="CDD" id="cd05213">
    <property type="entry name" value="NAD_bind_Glutamyl_tRNA_reduct"/>
    <property type="match status" value="1"/>
</dbReference>
<dbReference type="FunFam" id="3.30.460.30:FF:000001">
    <property type="entry name" value="Glutamyl-tRNA reductase"/>
    <property type="match status" value="1"/>
</dbReference>
<dbReference type="Gene3D" id="3.30.460.30">
    <property type="entry name" value="Glutamyl-tRNA reductase, N-terminal domain"/>
    <property type="match status" value="1"/>
</dbReference>
<dbReference type="Gene3D" id="3.40.50.720">
    <property type="entry name" value="NAD(P)-binding Rossmann-like Domain"/>
    <property type="match status" value="1"/>
</dbReference>
<dbReference type="HAMAP" id="MF_00087">
    <property type="entry name" value="Glu_tRNA_reductase"/>
    <property type="match status" value="1"/>
</dbReference>
<dbReference type="InterPro" id="IPR000343">
    <property type="entry name" value="4pyrrol_synth_GluRdtase"/>
</dbReference>
<dbReference type="InterPro" id="IPR015896">
    <property type="entry name" value="4pyrrol_synth_GluRdtase_dimer"/>
</dbReference>
<dbReference type="InterPro" id="IPR015895">
    <property type="entry name" value="4pyrrol_synth_GluRdtase_N"/>
</dbReference>
<dbReference type="InterPro" id="IPR018214">
    <property type="entry name" value="GluRdtase_CS"/>
</dbReference>
<dbReference type="InterPro" id="IPR036453">
    <property type="entry name" value="GluRdtase_dimer_dom_sf"/>
</dbReference>
<dbReference type="InterPro" id="IPR036343">
    <property type="entry name" value="GluRdtase_N_sf"/>
</dbReference>
<dbReference type="InterPro" id="IPR036291">
    <property type="entry name" value="NAD(P)-bd_dom_sf"/>
</dbReference>
<dbReference type="InterPro" id="IPR006151">
    <property type="entry name" value="Shikm_DH/Glu-tRNA_Rdtase"/>
</dbReference>
<dbReference type="NCBIfam" id="TIGR01035">
    <property type="entry name" value="hemA"/>
    <property type="match status" value="1"/>
</dbReference>
<dbReference type="PANTHER" id="PTHR43013">
    <property type="entry name" value="GLUTAMYL-TRNA REDUCTASE"/>
    <property type="match status" value="1"/>
</dbReference>
<dbReference type="PANTHER" id="PTHR43013:SF1">
    <property type="entry name" value="GLUTAMYL-TRNA REDUCTASE"/>
    <property type="match status" value="1"/>
</dbReference>
<dbReference type="Pfam" id="PF00745">
    <property type="entry name" value="GlutR_dimer"/>
    <property type="match status" value="1"/>
</dbReference>
<dbReference type="Pfam" id="PF05201">
    <property type="entry name" value="GlutR_N"/>
    <property type="match status" value="1"/>
</dbReference>
<dbReference type="Pfam" id="PF01488">
    <property type="entry name" value="Shikimate_DH"/>
    <property type="match status" value="1"/>
</dbReference>
<dbReference type="PIRSF" id="PIRSF000445">
    <property type="entry name" value="4pyrrol_synth_GluRdtase"/>
    <property type="match status" value="1"/>
</dbReference>
<dbReference type="SUPFAM" id="SSF69742">
    <property type="entry name" value="Glutamyl tRNA-reductase catalytic, N-terminal domain"/>
    <property type="match status" value="1"/>
</dbReference>
<dbReference type="SUPFAM" id="SSF69075">
    <property type="entry name" value="Glutamyl tRNA-reductase dimerization domain"/>
    <property type="match status" value="1"/>
</dbReference>
<dbReference type="SUPFAM" id="SSF51735">
    <property type="entry name" value="NAD(P)-binding Rossmann-fold domains"/>
    <property type="match status" value="1"/>
</dbReference>
<dbReference type="PROSITE" id="PS00747">
    <property type="entry name" value="GLUTR"/>
    <property type="match status" value="1"/>
</dbReference>
<organism>
    <name type="scientific">Campylobacter hominis (strain ATCC BAA-381 / DSM 21671 / CCUG 45161 / LMG 19568 / NCTC 13146 / CH001A)</name>
    <dbReference type="NCBI Taxonomy" id="360107"/>
    <lineage>
        <taxon>Bacteria</taxon>
        <taxon>Pseudomonadati</taxon>
        <taxon>Campylobacterota</taxon>
        <taxon>Epsilonproteobacteria</taxon>
        <taxon>Campylobacterales</taxon>
        <taxon>Campylobacteraceae</taxon>
        <taxon>Campylobacter</taxon>
    </lineage>
</organism>
<protein>
    <recommendedName>
        <fullName evidence="1">Glutamyl-tRNA reductase</fullName>
        <shortName evidence="1">GluTR</shortName>
        <ecNumber evidence="1">1.2.1.70</ecNumber>
    </recommendedName>
</protein>